<gene>
    <name evidence="1" type="primary">ihfB</name>
    <name evidence="1" type="synonym">himD</name>
    <name type="ordered locus">RL0417</name>
</gene>
<sequence>MIKSELVQIVAARNPHLYHRDVENIVNAVLDEITDALAAGNRVELRGFGAFSVKNRPSRSGRNPRTGDTVFVEEKWVPFFKTGKELRERLNPGQADEED</sequence>
<name>IHFB_RHIJ3</name>
<feature type="chain" id="PRO_1000060641" description="Integration host factor subunit beta">
    <location>
        <begin position="1"/>
        <end position="99"/>
    </location>
</feature>
<comment type="function">
    <text evidence="1">This protein is one of the two subunits of integration host factor, a specific DNA-binding protein that functions in genetic recombination as well as in transcriptional and translational control.</text>
</comment>
<comment type="subunit">
    <text evidence="1">Heterodimer of an alpha and a beta chain.</text>
</comment>
<comment type="similarity">
    <text evidence="1">Belongs to the bacterial histone-like protein family.</text>
</comment>
<proteinExistence type="inferred from homology"/>
<keyword id="KW-0233">DNA recombination</keyword>
<keyword id="KW-0238">DNA-binding</keyword>
<keyword id="KW-0804">Transcription</keyword>
<keyword id="KW-0805">Transcription regulation</keyword>
<keyword id="KW-0810">Translation regulation</keyword>
<organism>
    <name type="scientific">Rhizobium johnstonii (strain DSM 114642 / LMG 32736 / 3841)</name>
    <name type="common">Rhizobium leguminosarum bv. viciae</name>
    <dbReference type="NCBI Taxonomy" id="216596"/>
    <lineage>
        <taxon>Bacteria</taxon>
        <taxon>Pseudomonadati</taxon>
        <taxon>Pseudomonadota</taxon>
        <taxon>Alphaproteobacteria</taxon>
        <taxon>Hyphomicrobiales</taxon>
        <taxon>Rhizobiaceae</taxon>
        <taxon>Rhizobium/Agrobacterium group</taxon>
        <taxon>Rhizobium</taxon>
        <taxon>Rhizobium johnstonii</taxon>
    </lineage>
</organism>
<protein>
    <recommendedName>
        <fullName evidence="1">Integration host factor subunit beta</fullName>
        <shortName evidence="1">IHF-beta</shortName>
    </recommendedName>
</protein>
<accession>Q1MM94</accession>
<evidence type="ECO:0000255" key="1">
    <source>
        <dbReference type="HAMAP-Rule" id="MF_00381"/>
    </source>
</evidence>
<dbReference type="EMBL" id="AM236080">
    <property type="protein sequence ID" value="CAK05908.1"/>
    <property type="molecule type" value="Genomic_DNA"/>
</dbReference>
<dbReference type="RefSeq" id="WP_003544934.1">
    <property type="nucleotide sequence ID" value="NC_008380.1"/>
</dbReference>
<dbReference type="SMR" id="Q1MM94"/>
<dbReference type="EnsemblBacteria" id="CAK05908">
    <property type="protein sequence ID" value="CAK05908"/>
    <property type="gene ID" value="RL0417"/>
</dbReference>
<dbReference type="KEGG" id="rle:RL0417"/>
<dbReference type="eggNOG" id="COG0776">
    <property type="taxonomic scope" value="Bacteria"/>
</dbReference>
<dbReference type="HOGENOM" id="CLU_105066_2_0_5"/>
<dbReference type="Proteomes" id="UP000006575">
    <property type="component" value="Chromosome"/>
</dbReference>
<dbReference type="GO" id="GO:0005694">
    <property type="term" value="C:chromosome"/>
    <property type="evidence" value="ECO:0007669"/>
    <property type="project" value="InterPro"/>
</dbReference>
<dbReference type="GO" id="GO:0005829">
    <property type="term" value="C:cytosol"/>
    <property type="evidence" value="ECO:0007669"/>
    <property type="project" value="TreeGrafter"/>
</dbReference>
<dbReference type="GO" id="GO:0003677">
    <property type="term" value="F:DNA binding"/>
    <property type="evidence" value="ECO:0007669"/>
    <property type="project" value="UniProtKB-UniRule"/>
</dbReference>
<dbReference type="GO" id="GO:0030527">
    <property type="term" value="F:structural constituent of chromatin"/>
    <property type="evidence" value="ECO:0007669"/>
    <property type="project" value="InterPro"/>
</dbReference>
<dbReference type="GO" id="GO:0006310">
    <property type="term" value="P:DNA recombination"/>
    <property type="evidence" value="ECO:0007669"/>
    <property type="project" value="UniProtKB-UniRule"/>
</dbReference>
<dbReference type="GO" id="GO:0006355">
    <property type="term" value="P:regulation of DNA-templated transcription"/>
    <property type="evidence" value="ECO:0007669"/>
    <property type="project" value="UniProtKB-UniRule"/>
</dbReference>
<dbReference type="GO" id="GO:0006417">
    <property type="term" value="P:regulation of translation"/>
    <property type="evidence" value="ECO:0007669"/>
    <property type="project" value="UniProtKB-UniRule"/>
</dbReference>
<dbReference type="CDD" id="cd13836">
    <property type="entry name" value="IHF_B"/>
    <property type="match status" value="1"/>
</dbReference>
<dbReference type="Gene3D" id="4.10.520.10">
    <property type="entry name" value="IHF-like DNA-binding proteins"/>
    <property type="match status" value="1"/>
</dbReference>
<dbReference type="HAMAP" id="MF_00381">
    <property type="entry name" value="IHF_beta"/>
    <property type="match status" value="1"/>
</dbReference>
<dbReference type="InterPro" id="IPR000119">
    <property type="entry name" value="Hist_DNA-bd"/>
</dbReference>
<dbReference type="InterPro" id="IPR020816">
    <property type="entry name" value="Histone-like_DNA-bd_CS"/>
</dbReference>
<dbReference type="InterPro" id="IPR010992">
    <property type="entry name" value="IHF-like_DNA-bd_dom_sf"/>
</dbReference>
<dbReference type="InterPro" id="IPR005685">
    <property type="entry name" value="IHF_beta"/>
</dbReference>
<dbReference type="NCBIfam" id="TIGR00988">
    <property type="entry name" value="hip"/>
    <property type="match status" value="1"/>
</dbReference>
<dbReference type="NCBIfam" id="NF001222">
    <property type="entry name" value="PRK00199.1"/>
    <property type="match status" value="1"/>
</dbReference>
<dbReference type="PANTHER" id="PTHR33175">
    <property type="entry name" value="DNA-BINDING PROTEIN HU"/>
    <property type="match status" value="1"/>
</dbReference>
<dbReference type="PANTHER" id="PTHR33175:SF5">
    <property type="entry name" value="INTEGRATION HOST FACTOR SUBUNIT BETA"/>
    <property type="match status" value="1"/>
</dbReference>
<dbReference type="Pfam" id="PF00216">
    <property type="entry name" value="Bac_DNA_binding"/>
    <property type="match status" value="1"/>
</dbReference>
<dbReference type="PRINTS" id="PR01727">
    <property type="entry name" value="DNABINDINGHU"/>
</dbReference>
<dbReference type="SMART" id="SM00411">
    <property type="entry name" value="BHL"/>
    <property type="match status" value="1"/>
</dbReference>
<dbReference type="SUPFAM" id="SSF47729">
    <property type="entry name" value="IHF-like DNA-binding proteins"/>
    <property type="match status" value="1"/>
</dbReference>
<dbReference type="PROSITE" id="PS00045">
    <property type="entry name" value="HISTONE_LIKE"/>
    <property type="match status" value="1"/>
</dbReference>
<reference key="1">
    <citation type="journal article" date="2006" name="Genome Biol.">
        <title>The genome of Rhizobium leguminosarum has recognizable core and accessory components.</title>
        <authorList>
            <person name="Young J.P.W."/>
            <person name="Crossman L.C."/>
            <person name="Johnston A.W.B."/>
            <person name="Thomson N.R."/>
            <person name="Ghazoui Z.F."/>
            <person name="Hull K.H."/>
            <person name="Wexler M."/>
            <person name="Curson A.R.J."/>
            <person name="Todd J.D."/>
            <person name="Poole P.S."/>
            <person name="Mauchline T.H."/>
            <person name="East A.K."/>
            <person name="Quail M.A."/>
            <person name="Churcher C."/>
            <person name="Arrowsmith C."/>
            <person name="Cherevach I."/>
            <person name="Chillingworth T."/>
            <person name="Clarke K."/>
            <person name="Cronin A."/>
            <person name="Davis P."/>
            <person name="Fraser A."/>
            <person name="Hance Z."/>
            <person name="Hauser H."/>
            <person name="Jagels K."/>
            <person name="Moule S."/>
            <person name="Mungall K."/>
            <person name="Norbertczak H."/>
            <person name="Rabbinowitsch E."/>
            <person name="Sanders M."/>
            <person name="Simmonds M."/>
            <person name="Whitehead S."/>
            <person name="Parkhill J."/>
        </authorList>
    </citation>
    <scope>NUCLEOTIDE SEQUENCE [LARGE SCALE GENOMIC DNA]</scope>
    <source>
        <strain>DSM 114642 / LMG 32736 / 3841</strain>
    </source>
</reference>